<gene>
    <name type="primary">RTC1</name>
    <name type="ORF">LELG_05262</name>
</gene>
<keyword id="KW-0479">Metal-binding</keyword>
<keyword id="KW-1185">Reference proteome</keyword>
<keyword id="KW-0677">Repeat</keyword>
<keyword id="KW-0926">Vacuole</keyword>
<keyword id="KW-0853">WD repeat</keyword>
<keyword id="KW-0862">Zinc</keyword>
<keyword id="KW-0863">Zinc-finger</keyword>
<proteinExistence type="inferred from homology"/>
<protein>
    <recommendedName>
        <fullName>Restriction of telomere capping protein 1</fullName>
    </recommendedName>
</protein>
<dbReference type="EMBL" id="CH981532">
    <property type="protein sequence ID" value="EDK47081.1"/>
    <property type="molecule type" value="Genomic_DNA"/>
</dbReference>
<dbReference type="RefSeq" id="XP_001523416.1">
    <property type="nucleotide sequence ID" value="XM_001523366.1"/>
</dbReference>
<dbReference type="SMR" id="A5E6M3"/>
<dbReference type="FunCoup" id="A5E6M3">
    <property type="interactions" value="109"/>
</dbReference>
<dbReference type="STRING" id="379508.A5E6M3"/>
<dbReference type="GeneID" id="5230638"/>
<dbReference type="KEGG" id="lel:PVL30_002358"/>
<dbReference type="VEuPathDB" id="FungiDB:LELG_05262"/>
<dbReference type="eggNOG" id="KOG0269">
    <property type="taxonomic scope" value="Eukaryota"/>
</dbReference>
<dbReference type="HOGENOM" id="CLU_008512_0_0_1"/>
<dbReference type="InParanoid" id="A5E6M3"/>
<dbReference type="OMA" id="GRDGKCC"/>
<dbReference type="OrthoDB" id="60955at2759"/>
<dbReference type="Proteomes" id="UP000001996">
    <property type="component" value="Unassembled WGS sequence"/>
</dbReference>
<dbReference type="GO" id="GO:0005829">
    <property type="term" value="C:cytosol"/>
    <property type="evidence" value="ECO:0007669"/>
    <property type="project" value="TreeGrafter"/>
</dbReference>
<dbReference type="GO" id="GO:0061700">
    <property type="term" value="C:GATOR2 complex"/>
    <property type="evidence" value="ECO:0007669"/>
    <property type="project" value="TreeGrafter"/>
</dbReference>
<dbReference type="GO" id="GO:0005774">
    <property type="term" value="C:vacuolar membrane"/>
    <property type="evidence" value="ECO:0007669"/>
    <property type="project" value="TreeGrafter"/>
</dbReference>
<dbReference type="GO" id="GO:0008270">
    <property type="term" value="F:zinc ion binding"/>
    <property type="evidence" value="ECO:0007669"/>
    <property type="project" value="UniProtKB-KW"/>
</dbReference>
<dbReference type="GO" id="GO:0016239">
    <property type="term" value="P:positive regulation of macroautophagy"/>
    <property type="evidence" value="ECO:0007669"/>
    <property type="project" value="TreeGrafter"/>
</dbReference>
<dbReference type="GO" id="GO:1904263">
    <property type="term" value="P:positive regulation of TORC1 signaling"/>
    <property type="evidence" value="ECO:0007669"/>
    <property type="project" value="TreeGrafter"/>
</dbReference>
<dbReference type="CDD" id="cd16488">
    <property type="entry name" value="mRING-H2-C3H3C2_Mio-like"/>
    <property type="match status" value="1"/>
</dbReference>
<dbReference type="Gene3D" id="2.130.10.10">
    <property type="entry name" value="YVTN repeat-like/Quinoprotein amine dehydrogenase"/>
    <property type="match status" value="1"/>
</dbReference>
<dbReference type="InterPro" id="IPR015943">
    <property type="entry name" value="WD40/YVTN_repeat-like_dom_sf"/>
</dbReference>
<dbReference type="InterPro" id="IPR019775">
    <property type="entry name" value="WD40_repeat_CS"/>
</dbReference>
<dbReference type="InterPro" id="IPR036322">
    <property type="entry name" value="WD40_repeat_dom_sf"/>
</dbReference>
<dbReference type="InterPro" id="IPR001680">
    <property type="entry name" value="WD40_rpt"/>
</dbReference>
<dbReference type="InterPro" id="IPR037590">
    <property type="entry name" value="WDR24"/>
</dbReference>
<dbReference type="InterPro" id="IPR049566">
    <property type="entry name" value="WDR59_RTC1-like_RING_Znf"/>
</dbReference>
<dbReference type="InterPro" id="IPR001841">
    <property type="entry name" value="Znf_RING"/>
</dbReference>
<dbReference type="PANTHER" id="PTHR46200">
    <property type="entry name" value="GATOR COMPLEX PROTEIN WDR24"/>
    <property type="match status" value="1"/>
</dbReference>
<dbReference type="PANTHER" id="PTHR46200:SF1">
    <property type="entry name" value="GATOR COMPLEX PROTEIN WDR24"/>
    <property type="match status" value="1"/>
</dbReference>
<dbReference type="Pfam" id="PF00400">
    <property type="entry name" value="WD40"/>
    <property type="match status" value="2"/>
</dbReference>
<dbReference type="Pfam" id="PF17120">
    <property type="entry name" value="zf-RING_16"/>
    <property type="match status" value="1"/>
</dbReference>
<dbReference type="SMART" id="SM00320">
    <property type="entry name" value="WD40"/>
    <property type="match status" value="4"/>
</dbReference>
<dbReference type="SUPFAM" id="SSF50978">
    <property type="entry name" value="WD40 repeat-like"/>
    <property type="match status" value="1"/>
</dbReference>
<dbReference type="PROSITE" id="PS00678">
    <property type="entry name" value="WD_REPEATS_1"/>
    <property type="match status" value="1"/>
</dbReference>
<dbReference type="PROSITE" id="PS50082">
    <property type="entry name" value="WD_REPEATS_2"/>
    <property type="match status" value="2"/>
</dbReference>
<dbReference type="PROSITE" id="PS50294">
    <property type="entry name" value="WD_REPEATS_REGION"/>
    <property type="match status" value="1"/>
</dbReference>
<dbReference type="PROSITE" id="PS50089">
    <property type="entry name" value="ZF_RING_2"/>
    <property type="match status" value="1"/>
</dbReference>
<evidence type="ECO:0000250" key="1"/>
<evidence type="ECO:0000255" key="2">
    <source>
        <dbReference type="PROSITE-ProRule" id="PRU00175"/>
    </source>
</evidence>
<evidence type="ECO:0000256" key="3">
    <source>
        <dbReference type="SAM" id="MobiDB-lite"/>
    </source>
</evidence>
<evidence type="ECO:0000305" key="4"/>
<accession>A5E6M3</accession>
<reference key="1">
    <citation type="journal article" date="2009" name="Nature">
        <title>Evolution of pathogenicity and sexual reproduction in eight Candida genomes.</title>
        <authorList>
            <person name="Butler G."/>
            <person name="Rasmussen M.D."/>
            <person name="Lin M.F."/>
            <person name="Santos M.A.S."/>
            <person name="Sakthikumar S."/>
            <person name="Munro C.A."/>
            <person name="Rheinbay E."/>
            <person name="Grabherr M."/>
            <person name="Forche A."/>
            <person name="Reedy J.L."/>
            <person name="Agrafioti I."/>
            <person name="Arnaud M.B."/>
            <person name="Bates S."/>
            <person name="Brown A.J.P."/>
            <person name="Brunke S."/>
            <person name="Costanzo M.C."/>
            <person name="Fitzpatrick D.A."/>
            <person name="de Groot P.W.J."/>
            <person name="Harris D."/>
            <person name="Hoyer L.L."/>
            <person name="Hube B."/>
            <person name="Klis F.M."/>
            <person name="Kodira C."/>
            <person name="Lennard N."/>
            <person name="Logue M.E."/>
            <person name="Martin R."/>
            <person name="Neiman A.M."/>
            <person name="Nikolaou E."/>
            <person name="Quail M.A."/>
            <person name="Quinn J."/>
            <person name="Santos M.C."/>
            <person name="Schmitzberger F.F."/>
            <person name="Sherlock G."/>
            <person name="Shah P."/>
            <person name="Silverstein K.A.T."/>
            <person name="Skrzypek M.S."/>
            <person name="Soll D."/>
            <person name="Staggs R."/>
            <person name="Stansfield I."/>
            <person name="Stumpf M.P.H."/>
            <person name="Sudbery P.E."/>
            <person name="Srikantha T."/>
            <person name="Zeng Q."/>
            <person name="Berman J."/>
            <person name="Berriman M."/>
            <person name="Heitman J."/>
            <person name="Gow N.A.R."/>
            <person name="Lorenz M.C."/>
            <person name="Birren B.W."/>
            <person name="Kellis M."/>
            <person name="Cuomo C.A."/>
        </authorList>
    </citation>
    <scope>NUCLEOTIDE SEQUENCE [LARGE SCALE GENOMIC DNA]</scope>
    <source>
        <strain>ATCC 11503 / BCRC 21390 / CBS 2605 / JCM 1781 / NBRC 1676 / NRRL YB-4239</strain>
    </source>
</reference>
<feature type="chain" id="PRO_0000408786" description="Restriction of telomere capping protein 1">
    <location>
        <begin position="1"/>
        <end position="1163"/>
    </location>
</feature>
<feature type="repeat" description="WD 1">
    <location>
        <begin position="129"/>
        <end position="169"/>
    </location>
</feature>
<feature type="repeat" description="WD 2">
    <location>
        <begin position="175"/>
        <end position="214"/>
    </location>
</feature>
<feature type="repeat" description="WD 3">
    <location>
        <begin position="221"/>
        <end position="265"/>
    </location>
</feature>
<feature type="repeat" description="WD 4">
    <location>
        <begin position="274"/>
        <end position="313"/>
    </location>
</feature>
<feature type="repeat" description="WD 5">
    <location>
        <begin position="346"/>
        <end position="392"/>
    </location>
</feature>
<feature type="zinc finger region" description="RING-type; degenerate" evidence="2">
    <location>
        <begin position="1114"/>
        <end position="1157"/>
    </location>
</feature>
<feature type="region of interest" description="Disordered" evidence="3">
    <location>
        <begin position="24"/>
        <end position="52"/>
    </location>
</feature>
<feature type="region of interest" description="Disordered" evidence="3">
    <location>
        <begin position="525"/>
        <end position="606"/>
    </location>
</feature>
<feature type="region of interest" description="Disordered" evidence="3">
    <location>
        <begin position="833"/>
        <end position="881"/>
    </location>
</feature>
<feature type="compositionally biased region" description="Low complexity" evidence="3">
    <location>
        <begin position="28"/>
        <end position="41"/>
    </location>
</feature>
<feature type="compositionally biased region" description="Polar residues" evidence="3">
    <location>
        <begin position="539"/>
        <end position="556"/>
    </location>
</feature>
<feature type="compositionally biased region" description="Polar residues" evidence="3">
    <location>
        <begin position="571"/>
        <end position="585"/>
    </location>
</feature>
<feature type="compositionally biased region" description="Polar residues" evidence="3">
    <location>
        <begin position="593"/>
        <end position="606"/>
    </location>
</feature>
<feature type="compositionally biased region" description="Polar residues" evidence="3">
    <location>
        <begin position="868"/>
        <end position="880"/>
    </location>
</feature>
<name>RTC1_LODEL</name>
<sequence>MAQDSQGQQQSLAKFAFNIYGTLGTPQSSNSPSANSSISSHKSSKRLSKNQLSNSYSRRLTYNAERDVQAIGQLNCGIQISHHISGNEPSHHAVIGGKNYLRLLCLNRDQQQVLQEIDLLDVKSIYRSRNPNKISSVNTIKTRENTIACGMSNGTISMYKVSPYGKGTLHAMLSDHRRTVNSIDFIDSTDHIISGSQDGSIKLWDLRASPTKPVFNLQANLHNDPIRACQYSPHSVVRNKTCILSVHDSGALCKFDLRSGSGSNMYSPDRKWNLHAGPVLSLHIHPEKEYVATGGRDHKICVFNYSEGRSLRTTPENIINTYGSILKVRWSSYLVNQGGRAGDGGGMGSMHTSTSFGDSTLALTNYDLACLYLNDDPTVTIYNLNRKYIPKQIINPYSQKAISNFMWAQNEIQGRRIWTLNKANQFMAYDLDSNFDTDIKRPLDDLPPIGMSWNDNDDFIWVNQAKDEFEANFESMCDDEQFLTDTAAAATATSTAFTASTSTNTAIAAERASSFDLEDHDHKMAGSSLGTSPIERPSLTRSYTHNPMSQFMTKSPSPILRSGTGVLDMTSPPSAGSALSTSTYTPRPKLARNPSQTTQGSAGSFGSTPASSSFAIKYKSGASGPGVSGVPGGPGVPGVPGGPIGGSLRLNSMVKSPFAFPVELPFNDEEAFKFLATEYLVTTPEGFTLADTCLMNASVAHEVGAYQSSQVWRVLAISLSDEKTMNAAAARMKTRTTLDNKNHVDEPDSANADHFNAATNMSATTDPNITAVSHTKHDQEEDVDSFALKSIQSDLDNVVGSYNSNSTLSIKYGRNINPLSSVSSHGIAYHGNDVHSRTNSMHHSRANSFNNTHSVRAGSSGADDHLSVHSQSNPLAIDSTTSKRGDYELENTNLMNSIFLRSSPNSIGFGSSRSYSSLASSPIDARRALPERQVPPEPLELNHDTSLILEKKQSNHSPKLPKRSGLSIALKNDDHHDCENDYEDGTEAWSFKSLLKGALEYAASQGEITFVSTIAILFYELARDIITFDQCLGWLGEYVEILQRKCLFVEATKIINFAPLDVAEKLKTLYAADTIRLYCSHCLKLLTNEKSKRQTHGEFGYWYCDECLQRQLNCVFCNEPCKGLVVAISLKCGHRGHFGCLKEWFIDEQNVECPGGCDVPIVV</sequence>
<organism>
    <name type="scientific">Lodderomyces elongisporus (strain ATCC 11503 / CBS 2605 / JCM 1781 / NBRC 1676 / NRRL YB-4239)</name>
    <name type="common">Yeast</name>
    <name type="synonym">Saccharomyces elongisporus</name>
    <dbReference type="NCBI Taxonomy" id="379508"/>
    <lineage>
        <taxon>Eukaryota</taxon>
        <taxon>Fungi</taxon>
        <taxon>Dikarya</taxon>
        <taxon>Ascomycota</taxon>
        <taxon>Saccharomycotina</taxon>
        <taxon>Pichiomycetes</taxon>
        <taxon>Debaryomycetaceae</taxon>
        <taxon>Candida/Lodderomyces clade</taxon>
        <taxon>Lodderomyces</taxon>
    </lineage>
</organism>
<comment type="function">
    <text evidence="1">May be involved in a process influencing telomere capping.</text>
</comment>
<comment type="subcellular location">
    <subcellularLocation>
        <location evidence="1">Vacuole</location>
    </subcellularLocation>
</comment>
<comment type="similarity">
    <text evidence="4">Belongs to the WD repeat RTC1 family.</text>
</comment>